<gene>
    <name evidence="1" type="primary">yidD</name>
    <name type="ordered locus">STM3841</name>
</gene>
<dbReference type="EMBL" id="AE006468">
    <property type="protein sequence ID" value="AAL22700.1"/>
    <property type="molecule type" value="Genomic_DNA"/>
</dbReference>
<dbReference type="RefSeq" id="NP_462741.1">
    <property type="nucleotide sequence ID" value="NC_003197.2"/>
</dbReference>
<dbReference type="RefSeq" id="WP_001307474.1">
    <property type="nucleotide sequence ID" value="NC_003197.2"/>
</dbReference>
<dbReference type="STRING" id="99287.STM3841"/>
<dbReference type="PaxDb" id="99287-STM3841"/>
<dbReference type="DNASU" id="1255368"/>
<dbReference type="GeneID" id="1255368"/>
<dbReference type="GeneID" id="97443257"/>
<dbReference type="KEGG" id="stm:STM3841"/>
<dbReference type="PATRIC" id="fig|99287.12.peg.4068"/>
<dbReference type="HOGENOM" id="CLU_144811_5_2_6"/>
<dbReference type="OMA" id="FHPGGHD"/>
<dbReference type="PhylomeDB" id="P0A8C9"/>
<dbReference type="BioCyc" id="SENT99287:STM3841-MONOMER"/>
<dbReference type="Proteomes" id="UP000001014">
    <property type="component" value="Chromosome"/>
</dbReference>
<dbReference type="GO" id="GO:0005886">
    <property type="term" value="C:plasma membrane"/>
    <property type="evidence" value="ECO:0007669"/>
    <property type="project" value="UniProtKB-SubCell"/>
</dbReference>
<dbReference type="HAMAP" id="MF_00386">
    <property type="entry name" value="UPF0161_YidD"/>
    <property type="match status" value="1"/>
</dbReference>
<dbReference type="InterPro" id="IPR002696">
    <property type="entry name" value="Membr_insert_effic_factor_YidD"/>
</dbReference>
<dbReference type="NCBIfam" id="TIGR00278">
    <property type="entry name" value="membrane protein insertion efficiency factor YidD"/>
    <property type="match status" value="1"/>
</dbReference>
<dbReference type="PANTHER" id="PTHR33383">
    <property type="entry name" value="MEMBRANE PROTEIN INSERTION EFFICIENCY FACTOR-RELATED"/>
    <property type="match status" value="1"/>
</dbReference>
<dbReference type="PANTHER" id="PTHR33383:SF1">
    <property type="entry name" value="MEMBRANE PROTEIN INSERTION EFFICIENCY FACTOR-RELATED"/>
    <property type="match status" value="1"/>
</dbReference>
<dbReference type="Pfam" id="PF01809">
    <property type="entry name" value="YidD"/>
    <property type="match status" value="1"/>
</dbReference>
<dbReference type="SMART" id="SM01234">
    <property type="entry name" value="Haemolytic"/>
    <property type="match status" value="1"/>
</dbReference>
<evidence type="ECO:0000255" key="1">
    <source>
        <dbReference type="HAMAP-Rule" id="MF_00386"/>
    </source>
</evidence>
<accession>P0A8C9</accession>
<accession>P22847</accession>
<sequence>MAPPLSPGSRVLIALIRVYQRLISPLLGPHCRFTPTCSSYGIEALRRFGVIKGSWLTVKRVLKCHPLHPGGDDPVPPGPFDTREH</sequence>
<proteinExistence type="inferred from homology"/>
<name>YIDD_SALTY</name>
<protein>
    <recommendedName>
        <fullName evidence="1">Putative membrane protein insertion efficiency factor</fullName>
    </recommendedName>
</protein>
<reference key="1">
    <citation type="journal article" date="2001" name="Nature">
        <title>Complete genome sequence of Salmonella enterica serovar Typhimurium LT2.</title>
        <authorList>
            <person name="McClelland M."/>
            <person name="Sanderson K.E."/>
            <person name="Spieth J."/>
            <person name="Clifton S.W."/>
            <person name="Latreille P."/>
            <person name="Courtney L."/>
            <person name="Porwollik S."/>
            <person name="Ali J."/>
            <person name="Dante M."/>
            <person name="Du F."/>
            <person name="Hou S."/>
            <person name="Layman D."/>
            <person name="Leonard S."/>
            <person name="Nguyen C."/>
            <person name="Scott K."/>
            <person name="Holmes A."/>
            <person name="Grewal N."/>
            <person name="Mulvaney E."/>
            <person name="Ryan E."/>
            <person name="Sun H."/>
            <person name="Florea L."/>
            <person name="Miller W."/>
            <person name="Stoneking T."/>
            <person name="Nhan M."/>
            <person name="Waterston R."/>
            <person name="Wilson R.K."/>
        </authorList>
    </citation>
    <scope>NUCLEOTIDE SEQUENCE [LARGE SCALE GENOMIC DNA]</scope>
    <source>
        <strain>LT2 / SGSC1412 / ATCC 700720</strain>
    </source>
</reference>
<comment type="function">
    <text evidence="1">Could be involved in insertion of integral membrane proteins into the membrane.</text>
</comment>
<comment type="subcellular location">
    <subcellularLocation>
        <location evidence="1">Cell inner membrane</location>
        <topology evidence="1">Peripheral membrane protein</topology>
        <orientation evidence="1">Cytoplasmic side</orientation>
    </subcellularLocation>
</comment>
<comment type="similarity">
    <text evidence="1">Belongs to the UPF0161 family.</text>
</comment>
<keyword id="KW-0997">Cell inner membrane</keyword>
<keyword id="KW-1003">Cell membrane</keyword>
<keyword id="KW-0472">Membrane</keyword>
<keyword id="KW-1185">Reference proteome</keyword>
<feature type="chain" id="PRO_0000171863" description="Putative membrane protein insertion efficiency factor">
    <location>
        <begin position="1"/>
        <end position="85"/>
    </location>
</feature>
<organism>
    <name type="scientific">Salmonella typhimurium (strain LT2 / SGSC1412 / ATCC 700720)</name>
    <dbReference type="NCBI Taxonomy" id="99287"/>
    <lineage>
        <taxon>Bacteria</taxon>
        <taxon>Pseudomonadati</taxon>
        <taxon>Pseudomonadota</taxon>
        <taxon>Gammaproteobacteria</taxon>
        <taxon>Enterobacterales</taxon>
        <taxon>Enterobacteriaceae</taxon>
        <taxon>Salmonella</taxon>
    </lineage>
</organism>